<comment type="function">
    <text evidence="1">Co-chaperone involved in the maturation of iron-sulfur cluster-containing proteins. Seems to help targeting proteins to be folded toward HscA.</text>
</comment>
<comment type="subunit">
    <text evidence="1">Interacts with HscA and stimulates its ATPase activity.</text>
</comment>
<comment type="similarity">
    <text evidence="1">Belongs to the HscB family.</text>
</comment>
<reference key="1">
    <citation type="submission" date="2003-06" db="EMBL/GenBank/DDBJ databases">
        <title>The complete genome sequence of Haemophilus ducreyi.</title>
        <authorList>
            <person name="Munson R.S. Jr."/>
            <person name="Ray W.C."/>
            <person name="Mahairas G."/>
            <person name="Sabo P."/>
            <person name="Mungur R."/>
            <person name="Johnson L."/>
            <person name="Nguyen D."/>
            <person name="Wang J."/>
            <person name="Forst C."/>
            <person name="Hood L."/>
        </authorList>
    </citation>
    <scope>NUCLEOTIDE SEQUENCE [LARGE SCALE GENOMIC DNA]</scope>
    <source>
        <strain>35000HP / ATCC 700724</strain>
    </source>
</reference>
<accession>Q7VMA6</accession>
<organism>
    <name type="scientific">Haemophilus ducreyi (strain 35000HP / ATCC 700724)</name>
    <dbReference type="NCBI Taxonomy" id="233412"/>
    <lineage>
        <taxon>Bacteria</taxon>
        <taxon>Pseudomonadati</taxon>
        <taxon>Pseudomonadota</taxon>
        <taxon>Gammaproteobacteria</taxon>
        <taxon>Pasteurellales</taxon>
        <taxon>Pasteurellaceae</taxon>
        <taxon>Haemophilus</taxon>
    </lineage>
</organism>
<gene>
    <name evidence="1" type="primary">hscB</name>
    <name type="ordered locus">HD_1085</name>
</gene>
<dbReference type="EMBL" id="AE017143">
    <property type="protein sequence ID" value="AAP95951.1"/>
    <property type="molecule type" value="Genomic_DNA"/>
</dbReference>
<dbReference type="RefSeq" id="WP_010945000.1">
    <property type="nucleotide sequence ID" value="NC_002940.2"/>
</dbReference>
<dbReference type="SMR" id="Q7VMA6"/>
<dbReference type="STRING" id="233412.HD_1085"/>
<dbReference type="KEGG" id="hdu:HD_1085"/>
<dbReference type="eggNOG" id="COG1076">
    <property type="taxonomic scope" value="Bacteria"/>
</dbReference>
<dbReference type="HOGENOM" id="CLU_068529_2_0_6"/>
<dbReference type="OrthoDB" id="287587at2"/>
<dbReference type="Proteomes" id="UP000001022">
    <property type="component" value="Chromosome"/>
</dbReference>
<dbReference type="GO" id="GO:1990230">
    <property type="term" value="C:iron-sulfur cluster transfer complex"/>
    <property type="evidence" value="ECO:0007669"/>
    <property type="project" value="TreeGrafter"/>
</dbReference>
<dbReference type="GO" id="GO:0001671">
    <property type="term" value="F:ATPase activator activity"/>
    <property type="evidence" value="ECO:0007669"/>
    <property type="project" value="InterPro"/>
</dbReference>
<dbReference type="GO" id="GO:0051087">
    <property type="term" value="F:protein-folding chaperone binding"/>
    <property type="evidence" value="ECO:0007669"/>
    <property type="project" value="InterPro"/>
</dbReference>
<dbReference type="GO" id="GO:0044571">
    <property type="term" value="P:[2Fe-2S] cluster assembly"/>
    <property type="evidence" value="ECO:0007669"/>
    <property type="project" value="InterPro"/>
</dbReference>
<dbReference type="GO" id="GO:0051259">
    <property type="term" value="P:protein complex oligomerization"/>
    <property type="evidence" value="ECO:0007669"/>
    <property type="project" value="InterPro"/>
</dbReference>
<dbReference type="GO" id="GO:0006457">
    <property type="term" value="P:protein folding"/>
    <property type="evidence" value="ECO:0007669"/>
    <property type="project" value="UniProtKB-UniRule"/>
</dbReference>
<dbReference type="CDD" id="cd06257">
    <property type="entry name" value="DnaJ"/>
    <property type="match status" value="1"/>
</dbReference>
<dbReference type="Gene3D" id="1.10.287.110">
    <property type="entry name" value="DnaJ domain"/>
    <property type="match status" value="1"/>
</dbReference>
<dbReference type="Gene3D" id="1.20.1280.20">
    <property type="entry name" value="HscB, C-terminal domain"/>
    <property type="match status" value="1"/>
</dbReference>
<dbReference type="HAMAP" id="MF_00682">
    <property type="entry name" value="HscB"/>
    <property type="match status" value="1"/>
</dbReference>
<dbReference type="InterPro" id="IPR001623">
    <property type="entry name" value="DnaJ_domain"/>
</dbReference>
<dbReference type="InterPro" id="IPR004640">
    <property type="entry name" value="HscB"/>
</dbReference>
<dbReference type="InterPro" id="IPR036386">
    <property type="entry name" value="HscB_C_sf"/>
</dbReference>
<dbReference type="InterPro" id="IPR009073">
    <property type="entry name" value="HscB_oligo_C"/>
</dbReference>
<dbReference type="InterPro" id="IPR036869">
    <property type="entry name" value="J_dom_sf"/>
</dbReference>
<dbReference type="NCBIfam" id="TIGR00714">
    <property type="entry name" value="hscB"/>
    <property type="match status" value="1"/>
</dbReference>
<dbReference type="PANTHER" id="PTHR14021">
    <property type="entry name" value="IRON-SULFUR CLUSTER CO-CHAPERONE PROTEIN HSCB"/>
    <property type="match status" value="1"/>
</dbReference>
<dbReference type="PANTHER" id="PTHR14021:SF15">
    <property type="entry name" value="IRON-SULFUR CLUSTER CO-CHAPERONE PROTEIN HSCB"/>
    <property type="match status" value="1"/>
</dbReference>
<dbReference type="Pfam" id="PF07743">
    <property type="entry name" value="HSCB_C"/>
    <property type="match status" value="1"/>
</dbReference>
<dbReference type="SMART" id="SM00271">
    <property type="entry name" value="DnaJ"/>
    <property type="match status" value="1"/>
</dbReference>
<dbReference type="SUPFAM" id="SSF46565">
    <property type="entry name" value="Chaperone J-domain"/>
    <property type="match status" value="1"/>
</dbReference>
<dbReference type="SUPFAM" id="SSF47144">
    <property type="entry name" value="HSC20 (HSCB), C-terminal oligomerisation domain"/>
    <property type="match status" value="1"/>
</dbReference>
<sequence>MRNPFSLFNLPVQFQIDNAQLSERYLALQKQFHPDNFANESADKQLAALQQSADVNEALQILKDPIARATAIIEINTGIVKNLEENSRQDLDFLMQHMEWHEKLDSIENSRSEQQLAGFLKQIKTEQRNVEQQLATLLNQQQWQKADLLTERLRYFKKLIIQIEKVEEKLLEY</sequence>
<feature type="chain" id="PRO_0000070970" description="Co-chaperone protein HscB homolog">
    <location>
        <begin position="1"/>
        <end position="173"/>
    </location>
</feature>
<feature type="domain" description="J" evidence="1">
    <location>
        <begin position="3"/>
        <end position="75"/>
    </location>
</feature>
<name>HSCB_HAEDU</name>
<keyword id="KW-0143">Chaperone</keyword>
<keyword id="KW-1185">Reference proteome</keyword>
<proteinExistence type="inferred from homology"/>
<protein>
    <recommendedName>
        <fullName evidence="1">Co-chaperone protein HscB homolog</fullName>
    </recommendedName>
</protein>
<evidence type="ECO:0000255" key="1">
    <source>
        <dbReference type="HAMAP-Rule" id="MF_00682"/>
    </source>
</evidence>